<proteinExistence type="evidence at protein level"/>
<feature type="chain" id="PRO_0000234508" description="Centrosomal protein of 112 kDa">
    <location>
        <begin position="1"/>
        <end position="955"/>
    </location>
</feature>
<feature type="coiled-coil region" evidence="2">
    <location>
        <begin position="277"/>
        <end position="954"/>
    </location>
</feature>
<feature type="splice variant" id="VSP_018338" description="In isoform 2." evidence="6">
    <location>
        <begin position="1"/>
        <end position="744"/>
    </location>
</feature>
<feature type="splice variant" id="VSP_018339" description="In isoform 2." evidence="6">
    <original>KQQLVELGLLREEEKQRATREHEIVVNKLKAESEKMKIELKKTHAAETEMTLE</original>
    <variation>MWASLSLDHPSAKENQALRLIEMREENGNVPKTEQAGSLKPLRDTGKSNLKEK</variation>
    <location>
        <begin position="745"/>
        <end position="797"/>
    </location>
</feature>
<feature type="sequence variant" id="VAR_084997" description="In SPGF44; no protein detected in patient cells." evidence="5">
    <location>
        <begin position="166"/>
        <end position="955"/>
    </location>
</feature>
<feature type="sequence variant" id="VAR_050752" description="In dbSNP:rs17704679." evidence="3">
    <original>K</original>
    <variation>E</variation>
    <location>
        <position position="551"/>
    </location>
</feature>
<feature type="sequence variant" id="VAR_084998" description="In SPGF44; uncertain significance." evidence="5">
    <original>R</original>
    <variation>W</variation>
    <location>
        <position position="692"/>
    </location>
</feature>
<feature type="sequence variant" id="VAR_084999" description="In SPGF44; uncertain significance." evidence="5">
    <original>R</original>
    <variation>C</variation>
    <location>
        <position position="702"/>
    </location>
</feature>
<feature type="sequence conflict" description="In Ref. 4; AAM49719." evidence="7" ref="4">
    <original>C</original>
    <variation>S</variation>
    <location>
        <position position="449"/>
    </location>
</feature>
<feature type="sequence conflict" description="In Ref. 4; AAM49719." evidence="7" ref="4">
    <original>E</original>
    <variation>K</variation>
    <location>
        <position position="623"/>
    </location>
</feature>
<reference key="1">
    <citation type="journal article" date="2006" name="Nature">
        <title>DNA sequence of human chromosome 17 and analysis of rearrangement in the human lineage.</title>
        <authorList>
            <person name="Zody M.C."/>
            <person name="Garber M."/>
            <person name="Adams D.J."/>
            <person name="Sharpe T."/>
            <person name="Harrow J."/>
            <person name="Lupski J.R."/>
            <person name="Nicholson C."/>
            <person name="Searle S.M."/>
            <person name="Wilming L."/>
            <person name="Young S.K."/>
            <person name="Abouelleil A."/>
            <person name="Allen N.R."/>
            <person name="Bi W."/>
            <person name="Bloom T."/>
            <person name="Borowsky M.L."/>
            <person name="Bugalter B.E."/>
            <person name="Butler J."/>
            <person name="Chang J.L."/>
            <person name="Chen C.-K."/>
            <person name="Cook A."/>
            <person name="Corum B."/>
            <person name="Cuomo C.A."/>
            <person name="de Jong P.J."/>
            <person name="DeCaprio D."/>
            <person name="Dewar K."/>
            <person name="FitzGerald M."/>
            <person name="Gilbert J."/>
            <person name="Gibson R."/>
            <person name="Gnerre S."/>
            <person name="Goldstein S."/>
            <person name="Grafham D.V."/>
            <person name="Grocock R."/>
            <person name="Hafez N."/>
            <person name="Hagopian D.S."/>
            <person name="Hart E."/>
            <person name="Norman C.H."/>
            <person name="Humphray S."/>
            <person name="Jaffe D.B."/>
            <person name="Jones M."/>
            <person name="Kamal M."/>
            <person name="Khodiyar V.K."/>
            <person name="LaButti K."/>
            <person name="Laird G."/>
            <person name="Lehoczky J."/>
            <person name="Liu X."/>
            <person name="Lokyitsang T."/>
            <person name="Loveland J."/>
            <person name="Lui A."/>
            <person name="Macdonald P."/>
            <person name="Major J.E."/>
            <person name="Matthews L."/>
            <person name="Mauceli E."/>
            <person name="McCarroll S.A."/>
            <person name="Mihalev A.H."/>
            <person name="Mudge J."/>
            <person name="Nguyen C."/>
            <person name="Nicol R."/>
            <person name="O'Leary S.B."/>
            <person name="Osoegawa K."/>
            <person name="Schwartz D.C."/>
            <person name="Shaw-Smith C."/>
            <person name="Stankiewicz P."/>
            <person name="Steward C."/>
            <person name="Swarbreck D."/>
            <person name="Venkataraman V."/>
            <person name="Whittaker C.A."/>
            <person name="Yang X."/>
            <person name="Zimmer A.R."/>
            <person name="Bradley A."/>
            <person name="Hubbard T."/>
            <person name="Birren B.W."/>
            <person name="Rogers J."/>
            <person name="Lander E.S."/>
            <person name="Nusbaum C."/>
        </authorList>
    </citation>
    <scope>NUCLEOTIDE SEQUENCE [LARGE SCALE GENOMIC DNA]</scope>
</reference>
<reference key="2">
    <citation type="journal article" date="2004" name="Genome Res.">
        <title>The status, quality, and expansion of the NIH full-length cDNA project: the Mammalian Gene Collection (MGC).</title>
        <authorList>
            <consortium name="The MGC Project Team"/>
        </authorList>
    </citation>
    <scope>NUCLEOTIDE SEQUENCE [LARGE SCALE MRNA] (ISOFORM 2)</scope>
    <scope>NUCLEOTIDE SEQUENCE [LARGE SCALE MRNA] OF 1-562 (ISOFORM 1)</scope>
    <source>
        <tissue>Testis</tissue>
        <tissue>Uterus</tissue>
    </source>
</reference>
<reference key="3">
    <citation type="journal article" date="2004" name="Nat. Genet.">
        <title>Complete sequencing and characterization of 21,243 full-length human cDNAs.</title>
        <authorList>
            <person name="Ota T."/>
            <person name="Suzuki Y."/>
            <person name="Nishikawa T."/>
            <person name="Otsuki T."/>
            <person name="Sugiyama T."/>
            <person name="Irie R."/>
            <person name="Wakamatsu A."/>
            <person name="Hayashi K."/>
            <person name="Sato H."/>
            <person name="Nagai K."/>
            <person name="Kimura K."/>
            <person name="Makita H."/>
            <person name="Sekine M."/>
            <person name="Obayashi M."/>
            <person name="Nishi T."/>
            <person name="Shibahara T."/>
            <person name="Tanaka T."/>
            <person name="Ishii S."/>
            <person name="Yamamoto J."/>
            <person name="Saito K."/>
            <person name="Kawai Y."/>
            <person name="Isono Y."/>
            <person name="Nakamura Y."/>
            <person name="Nagahari K."/>
            <person name="Murakami K."/>
            <person name="Yasuda T."/>
            <person name="Iwayanagi T."/>
            <person name="Wagatsuma M."/>
            <person name="Shiratori A."/>
            <person name="Sudo H."/>
            <person name="Hosoiri T."/>
            <person name="Kaku Y."/>
            <person name="Kodaira H."/>
            <person name="Kondo H."/>
            <person name="Sugawara M."/>
            <person name="Takahashi M."/>
            <person name="Kanda K."/>
            <person name="Yokoi T."/>
            <person name="Furuya T."/>
            <person name="Kikkawa E."/>
            <person name="Omura Y."/>
            <person name="Abe K."/>
            <person name="Kamihara K."/>
            <person name="Katsuta N."/>
            <person name="Sato K."/>
            <person name="Tanikawa M."/>
            <person name="Yamazaki M."/>
            <person name="Ninomiya K."/>
            <person name="Ishibashi T."/>
            <person name="Yamashita H."/>
            <person name="Murakawa K."/>
            <person name="Fujimori K."/>
            <person name="Tanai H."/>
            <person name="Kimata M."/>
            <person name="Watanabe M."/>
            <person name="Hiraoka S."/>
            <person name="Chiba Y."/>
            <person name="Ishida S."/>
            <person name="Ono Y."/>
            <person name="Takiguchi S."/>
            <person name="Watanabe S."/>
            <person name="Yosida M."/>
            <person name="Hotuta T."/>
            <person name="Kusano J."/>
            <person name="Kanehori K."/>
            <person name="Takahashi-Fujii A."/>
            <person name="Hara H."/>
            <person name="Tanase T.-O."/>
            <person name="Nomura Y."/>
            <person name="Togiya S."/>
            <person name="Komai F."/>
            <person name="Hara R."/>
            <person name="Takeuchi K."/>
            <person name="Arita M."/>
            <person name="Imose N."/>
            <person name="Musashino K."/>
            <person name="Yuuki H."/>
            <person name="Oshima A."/>
            <person name="Sasaki N."/>
            <person name="Aotsuka S."/>
            <person name="Yoshikawa Y."/>
            <person name="Matsunawa H."/>
            <person name="Ichihara T."/>
            <person name="Shiohata N."/>
            <person name="Sano S."/>
            <person name="Moriya S."/>
            <person name="Momiyama H."/>
            <person name="Satoh N."/>
            <person name="Takami S."/>
            <person name="Terashima Y."/>
            <person name="Suzuki O."/>
            <person name="Nakagawa S."/>
            <person name="Senoh A."/>
            <person name="Mizoguchi H."/>
            <person name="Goto Y."/>
            <person name="Shimizu F."/>
            <person name="Wakebe H."/>
            <person name="Hishigaki H."/>
            <person name="Watanabe T."/>
            <person name="Sugiyama A."/>
            <person name="Takemoto M."/>
            <person name="Kawakami B."/>
            <person name="Yamazaki M."/>
            <person name="Watanabe K."/>
            <person name="Kumagai A."/>
            <person name="Itakura S."/>
            <person name="Fukuzumi Y."/>
            <person name="Fujimori Y."/>
            <person name="Komiyama M."/>
            <person name="Tashiro H."/>
            <person name="Tanigami A."/>
            <person name="Fujiwara T."/>
            <person name="Ono T."/>
            <person name="Yamada K."/>
            <person name="Fujii Y."/>
            <person name="Ozaki K."/>
            <person name="Hirao M."/>
            <person name="Ohmori Y."/>
            <person name="Kawabata A."/>
            <person name="Hikiji T."/>
            <person name="Kobatake N."/>
            <person name="Inagaki H."/>
            <person name="Ikema Y."/>
            <person name="Okamoto S."/>
            <person name="Okitani R."/>
            <person name="Kawakami T."/>
            <person name="Noguchi S."/>
            <person name="Itoh T."/>
            <person name="Shigeta K."/>
            <person name="Senba T."/>
            <person name="Matsumura K."/>
            <person name="Nakajima Y."/>
            <person name="Mizuno T."/>
            <person name="Morinaga M."/>
            <person name="Sasaki M."/>
            <person name="Togashi T."/>
            <person name="Oyama M."/>
            <person name="Hata H."/>
            <person name="Watanabe M."/>
            <person name="Komatsu T."/>
            <person name="Mizushima-Sugano J."/>
            <person name="Satoh T."/>
            <person name="Shirai Y."/>
            <person name="Takahashi Y."/>
            <person name="Nakagawa K."/>
            <person name="Okumura K."/>
            <person name="Nagase T."/>
            <person name="Nomura N."/>
            <person name="Kikuchi H."/>
            <person name="Masuho Y."/>
            <person name="Yamashita R."/>
            <person name="Nakai K."/>
            <person name="Yada T."/>
            <person name="Nakamura Y."/>
            <person name="Ohara O."/>
            <person name="Isogai T."/>
            <person name="Sugano S."/>
        </authorList>
    </citation>
    <scope>NUCLEOTIDE SEQUENCE [LARGE SCALE MRNA] OF 1-567 (ISOFORM 1)</scope>
    <scope>VARIANT GLU-551</scope>
</reference>
<reference key="4">
    <citation type="submission" date="2001-12" db="EMBL/GenBank/DDBJ databases">
        <authorList>
            <person name="Zan Q."/>
            <person name="Guo J.H."/>
            <person name="Yu L."/>
        </authorList>
    </citation>
    <scope>NUCLEOTIDE SEQUENCE [LARGE SCALE MRNA] OF 322-955 (ISOFORM 1)</scope>
    <source>
        <tissue>Lung</tissue>
    </source>
</reference>
<reference key="5">
    <citation type="journal article" date="2011" name="EMBO J.">
        <title>Novel asymmetrically localizing components of human centrosomes identified by complementary proteomics methods.</title>
        <authorList>
            <person name="Jakobsen L."/>
            <person name="Vanselow K."/>
            <person name="Skogs M."/>
            <person name="Toyoda Y."/>
            <person name="Lundberg E."/>
            <person name="Poser I."/>
            <person name="Falkenby L.G."/>
            <person name="Bennetzen M."/>
            <person name="Westendorf J."/>
            <person name="Nigg E.A."/>
            <person name="Uhlen M."/>
            <person name="Hyman A.A."/>
            <person name="Andersen J.S."/>
        </authorList>
    </citation>
    <scope>IDENTIFICATION BY MASS SPECTROMETRY</scope>
    <scope>SUBCELLULAR LOCATION</scope>
</reference>
<reference key="6">
    <citation type="journal article" date="2020" name="Clin. Genet.">
        <title>Loss-of-function mutations in centrosomal protein 112 is associated with human acephalic spermatozoa phenotype.</title>
        <authorList>
            <person name="Sha Y."/>
            <person name="Wang X."/>
            <person name="Yuan J."/>
            <person name="Zhu X."/>
            <person name="Su Z."/>
            <person name="Zhang X."/>
            <person name="Xu X."/>
            <person name="Wei X."/>
        </authorList>
    </citation>
    <scope>VARIANTS SPGF44 166-ARG--ARG-955 DEL; TRP-692 AND CYS-702</scope>
    <scope>CHARACTERIZATION OF VARIANT SPGF44 166-ARG--ARG-955 DEL</scope>
    <scope>INVOLVEMENT IN SPGF44</scope>
</reference>
<sequence length="955" mass="112749">MEVGSEEEKWEKLDAEFDHFVVDMKPFVLKLPHRTERQRCALWIRKLCEPSGTGAGIMGRKNRNLYAKLLLHMLKRGALEGPFTHRPEPGTLKILPSYMSIYFDEPNPARAKGSSPEGLPAWVLGELETSEHKLNESWKLSSGEDNTLVQSPTDVYSREQYTGKLRVRSHSLSPTHREDGQNITPKICEVYSKKSPVSLDDSDIEARLNSWNLGIENPRYLRQKPIPVSLMTPKFSLRKSSSFHDDHFLSRIREKELDMKTKMMEAKFHEEKLKLQQKHDADVQKILERKNNEIEELKTLYRSKQHETEETIRKLEKKVQTLIRDCQVIRETKEDQIAELKKICEQSTESLNNDWEKKLHNAVAEMEQEKFDLQKQHTENIQELLEDTNVRLNKMESEYMAQTQSTNHMIKELEARVQQLTGEAENSNLQRQKLIQEKAELERCYQITCSELQEVKARRNTLHKEKDHLVNDYEQNMKLLQTKYDADINLLKQEHALSASKASSMIEELEQNVCQLKQQLQESELQRKQQLRDQENKFQMEKSHLKHIYEKKAHDLQSELDKGKEDTQKKIHKFEEALKEKEEQLTRVTEVQRLQAQQADAALEEFKRQVELNSEKVYAEMKEQMEKVEADLTRSKSLREKQSKEFLWQLEDIRQRYEQQIVELKLEHEQEKTHLLQQHNAEKDSLVRDHEREIENLEKQLRAANMEHENQIQEFKKRDAQVIADMEAQVHKLREELINVNSQRKQQLVELGLLREEEKQRATREHEIVVNKLKAESEKMKIELKKTHAAETEMTLEKANSKLKQIEKEYTQKLAKSSQIIAELQTTISSLKEENSQQQLAAERRLQDVRQKFEDEKKQLIRDNDQAIKVLQDELENRSNQVRCAEKKLQHKELESQEQITYIRQEYETKLKGLMPASLRQELEDTISSLKSQVNFLQKRASILQEELTTYQGRR</sequence>
<dbReference type="EMBL" id="AC004805">
    <property type="status" value="NOT_ANNOTATED_CDS"/>
    <property type="molecule type" value="Genomic_DNA"/>
</dbReference>
<dbReference type="EMBL" id="AC105028">
    <property type="status" value="NOT_ANNOTATED_CDS"/>
    <property type="molecule type" value="Genomic_DNA"/>
</dbReference>
<dbReference type="EMBL" id="AC006440">
    <property type="status" value="NOT_ANNOTATED_CDS"/>
    <property type="molecule type" value="Genomic_DNA"/>
</dbReference>
<dbReference type="EMBL" id="AC007716">
    <property type="status" value="NOT_ANNOTATED_CDS"/>
    <property type="molecule type" value="Genomic_DNA"/>
</dbReference>
<dbReference type="EMBL" id="AC087302">
    <property type="status" value="NOT_ANNOTATED_CDS"/>
    <property type="molecule type" value="Genomic_DNA"/>
</dbReference>
<dbReference type="EMBL" id="AC006120">
    <property type="status" value="NOT_ANNOTATED_CDS"/>
    <property type="molecule type" value="Genomic_DNA"/>
</dbReference>
<dbReference type="EMBL" id="BC029524">
    <property type="protein sequence ID" value="AAH29524.1"/>
    <property type="molecule type" value="mRNA"/>
</dbReference>
<dbReference type="EMBL" id="BC037991">
    <property type="protein sequence ID" value="AAH37991.1"/>
    <property type="status" value="ALT_SEQ"/>
    <property type="molecule type" value="mRNA"/>
</dbReference>
<dbReference type="EMBL" id="AK096929">
    <property type="status" value="NOT_ANNOTATED_CDS"/>
    <property type="molecule type" value="mRNA"/>
</dbReference>
<dbReference type="EMBL" id="AF458591">
    <property type="protein sequence ID" value="AAM49719.1"/>
    <property type="status" value="ALT_INIT"/>
    <property type="molecule type" value="mRNA"/>
</dbReference>
<dbReference type="CCDS" id="CCDS32710.1">
    <molecule id="Q8N8E3-1"/>
</dbReference>
<dbReference type="CCDS" id="CCDS32711.1">
    <molecule id="Q8N8E3-2"/>
</dbReference>
<dbReference type="RefSeq" id="NP_001032402.1">
    <molecule id="Q8N8E3-2"/>
    <property type="nucleotide sequence ID" value="NM_001037325.3"/>
</dbReference>
<dbReference type="RefSeq" id="NP_001186094.1">
    <molecule id="Q8N8E3-1"/>
    <property type="nucleotide sequence ID" value="NM_001199165.4"/>
</dbReference>
<dbReference type="RefSeq" id="NP_001340056.1">
    <molecule id="Q8N8E3-1"/>
    <property type="nucleotide sequence ID" value="NM_001353127.2"/>
</dbReference>
<dbReference type="RefSeq" id="XP_011522763.1">
    <property type="nucleotide sequence ID" value="XM_011524461.2"/>
</dbReference>
<dbReference type="SMR" id="Q8N8E3"/>
<dbReference type="BioGRID" id="128362">
    <property type="interactions" value="30"/>
</dbReference>
<dbReference type="FunCoup" id="Q8N8E3">
    <property type="interactions" value="215"/>
</dbReference>
<dbReference type="IntAct" id="Q8N8E3">
    <property type="interactions" value="17"/>
</dbReference>
<dbReference type="MINT" id="Q8N8E3"/>
<dbReference type="STRING" id="9606.ENSP00000376522"/>
<dbReference type="GlyGen" id="Q8N8E3">
    <property type="glycosylation" value="1 site, 1 O-linked glycan (1 site)"/>
</dbReference>
<dbReference type="iPTMnet" id="Q8N8E3"/>
<dbReference type="PhosphoSitePlus" id="Q8N8E3"/>
<dbReference type="BioMuta" id="CEP112"/>
<dbReference type="DMDM" id="97045680"/>
<dbReference type="jPOST" id="Q8N8E3"/>
<dbReference type="MassIVE" id="Q8N8E3"/>
<dbReference type="PaxDb" id="9606-ENSP00000376522"/>
<dbReference type="PeptideAtlas" id="Q8N8E3"/>
<dbReference type="ProteomicsDB" id="72410">
    <molecule id="Q8N8E3-1"/>
</dbReference>
<dbReference type="ProteomicsDB" id="72411">
    <molecule id="Q8N8E3-2"/>
</dbReference>
<dbReference type="Pumba" id="Q8N8E3"/>
<dbReference type="Antibodypedia" id="19170">
    <property type="antibodies" value="131 antibodies from 24 providers"/>
</dbReference>
<dbReference type="DNASU" id="201134"/>
<dbReference type="Ensembl" id="ENST00000317442.12">
    <molecule id="Q8N8E3-2"/>
    <property type="protein sequence ID" value="ENSP00000320592.5"/>
    <property type="gene ID" value="ENSG00000154240.18"/>
</dbReference>
<dbReference type="Ensembl" id="ENST00000392769.6">
    <molecule id="Q8N8E3-1"/>
    <property type="protein sequence ID" value="ENSP00000376522.2"/>
    <property type="gene ID" value="ENSG00000154240.18"/>
</dbReference>
<dbReference type="Ensembl" id="ENST00000535342.7">
    <molecule id="Q8N8E3-1"/>
    <property type="protein sequence ID" value="ENSP00000442784.2"/>
    <property type="gene ID" value="ENSG00000154240.18"/>
</dbReference>
<dbReference type="GeneID" id="201134"/>
<dbReference type="KEGG" id="hsa:201134"/>
<dbReference type="MANE-Select" id="ENST00000535342.7">
    <property type="protein sequence ID" value="ENSP00000442784.2"/>
    <property type="RefSeq nucleotide sequence ID" value="NM_001199165.4"/>
    <property type="RefSeq protein sequence ID" value="NP_001186094.1"/>
</dbReference>
<dbReference type="UCSC" id="uc002jfk.4">
    <molecule id="Q8N8E3-1"/>
    <property type="organism name" value="human"/>
</dbReference>
<dbReference type="AGR" id="HGNC:28514"/>
<dbReference type="CTD" id="201134"/>
<dbReference type="DisGeNET" id="201134"/>
<dbReference type="GeneCards" id="CEP112"/>
<dbReference type="HGNC" id="HGNC:28514">
    <property type="gene designation" value="CEP112"/>
</dbReference>
<dbReference type="HPA" id="ENSG00000154240">
    <property type="expression patterns" value="Tissue enhanced (testis)"/>
</dbReference>
<dbReference type="MalaCards" id="CEP112"/>
<dbReference type="MIM" id="618980">
    <property type="type" value="gene"/>
</dbReference>
<dbReference type="MIM" id="619044">
    <property type="type" value="phenotype"/>
</dbReference>
<dbReference type="neXtProt" id="NX_Q8N8E3"/>
<dbReference type="OpenTargets" id="ENSG00000154240"/>
<dbReference type="PharmGKB" id="PA142672163"/>
<dbReference type="VEuPathDB" id="HostDB:ENSG00000154240"/>
<dbReference type="eggNOG" id="ENOG502QQAE">
    <property type="taxonomic scope" value="Eukaryota"/>
</dbReference>
<dbReference type="GeneTree" id="ENSGT00390000006544"/>
<dbReference type="HOGENOM" id="CLU_131263_0_0_1"/>
<dbReference type="InParanoid" id="Q8N8E3"/>
<dbReference type="OMA" id="RMHEKEX"/>
<dbReference type="OrthoDB" id="78101at2759"/>
<dbReference type="PAN-GO" id="Q8N8E3">
    <property type="GO annotations" value="0 GO annotations based on evolutionary models"/>
</dbReference>
<dbReference type="PhylomeDB" id="Q8N8E3"/>
<dbReference type="TreeFam" id="TF328995"/>
<dbReference type="PathwayCommons" id="Q8N8E3"/>
<dbReference type="SignaLink" id="Q8N8E3"/>
<dbReference type="BioGRID-ORCS" id="201134">
    <property type="hits" value="12 hits in 1149 CRISPR screens"/>
</dbReference>
<dbReference type="CD-CODE" id="8C2F96ED">
    <property type="entry name" value="Centrosome"/>
</dbReference>
<dbReference type="ChiTaRS" id="CEP112">
    <property type="organism name" value="human"/>
</dbReference>
<dbReference type="GenomeRNAi" id="201134"/>
<dbReference type="Pharos" id="Q8N8E3">
    <property type="development level" value="Tbio"/>
</dbReference>
<dbReference type="PRO" id="PR:Q8N8E3"/>
<dbReference type="Proteomes" id="UP000005640">
    <property type="component" value="Chromosome 17"/>
</dbReference>
<dbReference type="RNAct" id="Q8N8E3">
    <property type="molecule type" value="protein"/>
</dbReference>
<dbReference type="Bgee" id="ENSG00000154240">
    <property type="expression patterns" value="Expressed in sperm and 177 other cell types or tissues"/>
</dbReference>
<dbReference type="ExpressionAtlas" id="Q8N8E3">
    <property type="expression patterns" value="baseline and differential"/>
</dbReference>
<dbReference type="GO" id="GO:0005813">
    <property type="term" value="C:centrosome"/>
    <property type="evidence" value="ECO:0000314"/>
    <property type="project" value="UniProtKB"/>
</dbReference>
<dbReference type="GO" id="GO:0005737">
    <property type="term" value="C:cytoplasm"/>
    <property type="evidence" value="ECO:0007669"/>
    <property type="project" value="UniProtKB-KW"/>
</dbReference>
<dbReference type="GO" id="GO:0060077">
    <property type="term" value="C:inhibitory synapse"/>
    <property type="evidence" value="ECO:0007669"/>
    <property type="project" value="Ensembl"/>
</dbReference>
<dbReference type="GO" id="GO:0005886">
    <property type="term" value="C:plasma membrane"/>
    <property type="evidence" value="ECO:0007669"/>
    <property type="project" value="Ensembl"/>
</dbReference>
<dbReference type="GO" id="GO:0097120">
    <property type="term" value="P:receptor localization to synapse"/>
    <property type="evidence" value="ECO:0007669"/>
    <property type="project" value="Ensembl"/>
</dbReference>
<dbReference type="InterPro" id="IPR055310">
    <property type="entry name" value="CEP112"/>
</dbReference>
<dbReference type="InterPro" id="IPR027831">
    <property type="entry name" value="DUF4485"/>
</dbReference>
<dbReference type="PANTHER" id="PTHR18871">
    <property type="entry name" value="CENTROSOMAL PROTEIN OF 112 KDA"/>
    <property type="match status" value="1"/>
</dbReference>
<dbReference type="PANTHER" id="PTHR18871:SF2">
    <property type="entry name" value="CENTROSOMAL PROTEIN OF 112 KDA"/>
    <property type="match status" value="1"/>
</dbReference>
<dbReference type="Pfam" id="PF14846">
    <property type="entry name" value="DUF4485"/>
    <property type="match status" value="1"/>
</dbReference>
<name>CE112_HUMAN</name>
<protein>
    <recommendedName>
        <fullName>Centrosomal protein of 112 kDa</fullName>
        <shortName>Cep112</shortName>
    </recommendedName>
    <alternativeName>
        <fullName>Coiled-coil domain-containing protein 46</fullName>
    </alternativeName>
</protein>
<gene>
    <name type="primary">CEP112</name>
    <name type="synonym">CCDC46</name>
</gene>
<keyword id="KW-0025">Alternative splicing</keyword>
<keyword id="KW-0175">Coiled coil</keyword>
<keyword id="KW-0963">Cytoplasm</keyword>
<keyword id="KW-0206">Cytoskeleton</keyword>
<keyword id="KW-0225">Disease variant</keyword>
<keyword id="KW-1267">Proteomics identification</keyword>
<keyword id="KW-1185">Reference proteome</keyword>
<comment type="interaction">
    <interactant intactId="EBI-2836899">
        <id>Q8N8E3</id>
    </interactant>
    <interactant intactId="EBI-356498">
        <id>P62258</id>
        <label>YWHAE</label>
    </interactant>
    <organismsDiffer>false</organismsDiffer>
    <experiments>4</experiments>
</comment>
<comment type="subcellular location">
    <subcellularLocation>
        <location evidence="1">Cytoplasm</location>
        <location evidence="1">Cytoskeleton</location>
        <location evidence="1">Microtubule organizing center</location>
        <location evidence="1">Centrosome</location>
    </subcellularLocation>
    <text evidence="4">Localizes around spindle poles in some cells.</text>
</comment>
<comment type="alternative products">
    <event type="alternative splicing"/>
    <isoform>
        <id>Q8N8E3-1</id>
        <name>1</name>
        <sequence type="displayed"/>
    </isoform>
    <isoform>
        <id>Q8N8E3-2</id>
        <name>2</name>
        <sequence type="described" ref="VSP_018338 VSP_018339"/>
    </isoform>
</comment>
<comment type="disease" evidence="5">
    <disease id="DI-05927">
        <name>Spermatogenic failure 44</name>
        <acronym>SPGF44</acronym>
        <description>An autosomal recessive infertility disorder caused by spermatogenesis defects and characterized by the presence of acephalic spermatozoa in the semen of affected individuals.</description>
        <dbReference type="MIM" id="619044"/>
    </disease>
    <text>The disease may be caused by variants affecting the gene represented in this entry.</text>
</comment>
<comment type="sequence caution" evidence="7">
    <conflict type="miscellaneous discrepancy">
        <sequence resource="EMBL-CDS" id="AAH37991"/>
    </conflict>
    <text>Contaminating sequence. Potential poly-A sequence starting in position 563.</text>
</comment>
<comment type="sequence caution" evidence="7">
    <conflict type="erroneous initiation">
        <sequence resource="EMBL-CDS" id="AAM49719"/>
    </conflict>
</comment>
<accession>Q8N8E3</accession>
<accession>Q6PIB5</accession>
<accession>Q8NCR4</accession>
<accession>Q8NFR4</accession>
<evidence type="ECO:0000250" key="1"/>
<evidence type="ECO:0000255" key="2"/>
<evidence type="ECO:0000269" key="3">
    <source>
    </source>
</evidence>
<evidence type="ECO:0000269" key="4">
    <source>
    </source>
</evidence>
<evidence type="ECO:0000269" key="5">
    <source>
    </source>
</evidence>
<evidence type="ECO:0000303" key="6">
    <source>
    </source>
</evidence>
<evidence type="ECO:0000305" key="7"/>
<organism>
    <name type="scientific">Homo sapiens</name>
    <name type="common">Human</name>
    <dbReference type="NCBI Taxonomy" id="9606"/>
    <lineage>
        <taxon>Eukaryota</taxon>
        <taxon>Metazoa</taxon>
        <taxon>Chordata</taxon>
        <taxon>Craniata</taxon>
        <taxon>Vertebrata</taxon>
        <taxon>Euteleostomi</taxon>
        <taxon>Mammalia</taxon>
        <taxon>Eutheria</taxon>
        <taxon>Euarchontoglires</taxon>
        <taxon>Primates</taxon>
        <taxon>Haplorrhini</taxon>
        <taxon>Catarrhini</taxon>
        <taxon>Hominidae</taxon>
        <taxon>Homo</taxon>
    </lineage>
</organism>